<sequence length="591" mass="64771">MKKISLPKIGIRPVIDGRRMGVRESLEEQTMNMAKATAALITEKIRHACGAQVECVIADTCIAGMAESAACEEKFSSQNVGVTITVTPCWCYGSETIDMDPMRPKAIWGFNGTERPGAVYLAAALAAHSQKGIPAFSIYGHDVQDADDTSIPADVEEKLLRFARAGLAVASMKGKSYLSVGGVSMGIAGSIVDHNFFESWLGMKVQAVDMTELRRRIDQKIYDEAELEMALAWADKNFRYGEDQNASQYKRNEAQNRAVLKESLLMAMCIRDMMQGNKTLADKGLVEESLGYNAIAAGFQGQRHWTDQYPNGDTAEALLNSSFDWNGVREPFVVATENDSLNGVAMLFGHQLTGTAQIFADVRTYWSPEAVERVTGQALSGLAEHGIIHLINSGSAALDGACKQRDSEGKPTMKPHWEISQQEADACLAATEWCPAIHEYFRGGGYSSRFLTEGGVPFTMTRVNIIKGLGPVLQIAEGWSVELPKAMHDQLDARTNSTWPTTWFAPRLTGKGPFTDVYSVMANWGANHGVLTIGHVGADFITLAAMLRIPVCMHNVEEAKIYRPSAWAAHGMDIEGQDYRACQNYGPLYKR</sequence>
<name>FUCI_SALPC</name>
<protein>
    <recommendedName>
        <fullName evidence="1">L-fucose isomerase</fullName>
        <ecNumber evidence="1">5.3.1.25</ecNumber>
    </recommendedName>
    <alternativeName>
        <fullName evidence="1">6-deoxy-L-galactose isomerase</fullName>
    </alternativeName>
    <alternativeName>
        <fullName>FucIase</fullName>
    </alternativeName>
</protein>
<dbReference type="EC" id="5.3.1.25" evidence="1"/>
<dbReference type="EMBL" id="CP000857">
    <property type="protein sequence ID" value="ACN47123.1"/>
    <property type="molecule type" value="Genomic_DNA"/>
</dbReference>
<dbReference type="RefSeq" id="WP_000724126.1">
    <property type="nucleotide sequence ID" value="NC_012125.1"/>
</dbReference>
<dbReference type="SMR" id="C0PXG5"/>
<dbReference type="KEGG" id="sei:SPC_3035"/>
<dbReference type="HOGENOM" id="CLU_033326_1_0_6"/>
<dbReference type="UniPathway" id="UPA00563">
    <property type="reaction ID" value="UER00624"/>
</dbReference>
<dbReference type="Proteomes" id="UP000001599">
    <property type="component" value="Chromosome"/>
</dbReference>
<dbReference type="GO" id="GO:0005737">
    <property type="term" value="C:cytoplasm"/>
    <property type="evidence" value="ECO:0007669"/>
    <property type="project" value="UniProtKB-SubCell"/>
</dbReference>
<dbReference type="GO" id="GO:0008790">
    <property type="term" value="F:arabinose isomerase activity"/>
    <property type="evidence" value="ECO:0007669"/>
    <property type="project" value="TreeGrafter"/>
</dbReference>
<dbReference type="GO" id="GO:0008736">
    <property type="term" value="F:L-fucose isomerase activity"/>
    <property type="evidence" value="ECO:0007669"/>
    <property type="project" value="UniProtKB-UniRule"/>
</dbReference>
<dbReference type="GO" id="GO:0030145">
    <property type="term" value="F:manganese ion binding"/>
    <property type="evidence" value="ECO:0007669"/>
    <property type="project" value="UniProtKB-UniRule"/>
</dbReference>
<dbReference type="GO" id="GO:0019571">
    <property type="term" value="P:D-arabinose catabolic process"/>
    <property type="evidence" value="ECO:0007669"/>
    <property type="project" value="TreeGrafter"/>
</dbReference>
<dbReference type="GO" id="GO:0042355">
    <property type="term" value="P:L-fucose catabolic process"/>
    <property type="evidence" value="ECO:0007669"/>
    <property type="project" value="UniProtKB-UniRule"/>
</dbReference>
<dbReference type="FunFam" id="3.20.14.10:FF:000001">
    <property type="entry name" value="L-fucose isomerase"/>
    <property type="match status" value="1"/>
</dbReference>
<dbReference type="FunFam" id="3.40.275.10:FF:000001">
    <property type="entry name" value="L-fucose isomerase"/>
    <property type="match status" value="1"/>
</dbReference>
<dbReference type="FunFam" id="3.40.50.1070:FF:000001">
    <property type="entry name" value="L-fucose isomerase"/>
    <property type="match status" value="1"/>
</dbReference>
<dbReference type="Gene3D" id="3.40.50.1070">
    <property type="match status" value="1"/>
</dbReference>
<dbReference type="Gene3D" id="3.40.275.10">
    <property type="entry name" value="L-fucose Isomerase, Chain A, domain 2"/>
    <property type="match status" value="1"/>
</dbReference>
<dbReference type="Gene3D" id="3.20.14.10">
    <property type="entry name" value="L-fucose/L-arabinose isomerase, C-terminal"/>
    <property type="match status" value="1"/>
</dbReference>
<dbReference type="HAMAP" id="MF_01254">
    <property type="entry name" value="Fucose_iso"/>
    <property type="match status" value="1"/>
</dbReference>
<dbReference type="InterPro" id="IPR004216">
    <property type="entry name" value="Fuc/Ara_isomerase_C"/>
</dbReference>
<dbReference type="InterPro" id="IPR038393">
    <property type="entry name" value="Fuc_iso_dom3_sf"/>
</dbReference>
<dbReference type="InterPro" id="IPR015888">
    <property type="entry name" value="Fuc_isomerase_C"/>
</dbReference>
<dbReference type="InterPro" id="IPR038391">
    <property type="entry name" value="Fucose_iso_dom1_sf"/>
</dbReference>
<dbReference type="InterPro" id="IPR012888">
    <property type="entry name" value="Fucose_iso_N1"/>
</dbReference>
<dbReference type="InterPro" id="IPR005763">
    <property type="entry name" value="Fucose_isomerase"/>
</dbReference>
<dbReference type="InterPro" id="IPR038392">
    <property type="entry name" value="Fucose_isomerase_dom2_sf"/>
</dbReference>
<dbReference type="InterPro" id="IPR009015">
    <property type="entry name" value="Fucose_isomerase_N/cen_sf"/>
</dbReference>
<dbReference type="InterPro" id="IPR012889">
    <property type="entry name" value="Fucose_isomerase_N2"/>
</dbReference>
<dbReference type="NCBIfam" id="TIGR01089">
    <property type="entry name" value="fucI"/>
    <property type="match status" value="1"/>
</dbReference>
<dbReference type="NCBIfam" id="NF008220">
    <property type="entry name" value="PRK10991.1"/>
    <property type="match status" value="1"/>
</dbReference>
<dbReference type="PANTHER" id="PTHR37840">
    <property type="entry name" value="L-FUCOSE ISOMERASE"/>
    <property type="match status" value="1"/>
</dbReference>
<dbReference type="PANTHER" id="PTHR37840:SF1">
    <property type="entry name" value="L-FUCOSE ISOMERASE"/>
    <property type="match status" value="1"/>
</dbReference>
<dbReference type="Pfam" id="PF02952">
    <property type="entry name" value="Fucose_iso_C"/>
    <property type="match status" value="1"/>
</dbReference>
<dbReference type="Pfam" id="PF07881">
    <property type="entry name" value="Fucose_iso_N1"/>
    <property type="match status" value="1"/>
</dbReference>
<dbReference type="Pfam" id="PF07882">
    <property type="entry name" value="Fucose_iso_N2"/>
    <property type="match status" value="1"/>
</dbReference>
<dbReference type="SUPFAM" id="SSF50443">
    <property type="entry name" value="FucI/AraA C-terminal domain-like"/>
    <property type="match status" value="1"/>
</dbReference>
<dbReference type="SUPFAM" id="SSF53743">
    <property type="entry name" value="FucI/AraA N-terminal and middle domains"/>
    <property type="match status" value="1"/>
</dbReference>
<proteinExistence type="inferred from homology"/>
<accession>C0PXG5</accession>
<organism>
    <name type="scientific">Salmonella paratyphi C (strain RKS4594)</name>
    <dbReference type="NCBI Taxonomy" id="476213"/>
    <lineage>
        <taxon>Bacteria</taxon>
        <taxon>Pseudomonadati</taxon>
        <taxon>Pseudomonadota</taxon>
        <taxon>Gammaproteobacteria</taxon>
        <taxon>Enterobacterales</taxon>
        <taxon>Enterobacteriaceae</taxon>
        <taxon>Salmonella</taxon>
    </lineage>
</organism>
<comment type="function">
    <text evidence="1">Converts the aldose L-fucose into the corresponding ketose L-fuculose.</text>
</comment>
<comment type="catalytic activity">
    <reaction evidence="1">
        <text>L-fucose = L-fuculose</text>
        <dbReference type="Rhea" id="RHEA:17233"/>
        <dbReference type="ChEBI" id="CHEBI:2181"/>
        <dbReference type="ChEBI" id="CHEBI:17617"/>
        <dbReference type="EC" id="5.3.1.25"/>
    </reaction>
</comment>
<comment type="cofactor">
    <cofactor evidence="1">
        <name>Mn(2+)</name>
        <dbReference type="ChEBI" id="CHEBI:29035"/>
    </cofactor>
</comment>
<comment type="pathway">
    <text evidence="1">Carbohydrate degradation; L-fucose degradation; L-lactaldehyde and glycerone phosphate from L-fucose: step 1/3.</text>
</comment>
<comment type="subunit">
    <text evidence="1">Homohexamer.</text>
</comment>
<comment type="subcellular location">
    <subcellularLocation>
        <location evidence="1">Cytoplasm</location>
    </subcellularLocation>
</comment>
<comment type="similarity">
    <text evidence="1">Belongs to the L-fucose isomerase family.</text>
</comment>
<feature type="chain" id="PRO_1000165096" description="L-fucose isomerase">
    <location>
        <begin position="1"/>
        <end position="591"/>
    </location>
</feature>
<feature type="active site" description="Proton acceptor" evidence="1">
    <location>
        <position position="337"/>
    </location>
</feature>
<feature type="active site" description="Proton acceptor" evidence="1">
    <location>
        <position position="361"/>
    </location>
</feature>
<feature type="binding site" evidence="1">
    <location>
        <position position="337"/>
    </location>
    <ligand>
        <name>Mn(2+)</name>
        <dbReference type="ChEBI" id="CHEBI:29035"/>
    </ligand>
</feature>
<feature type="binding site" evidence="1">
    <location>
        <position position="361"/>
    </location>
    <ligand>
        <name>Mn(2+)</name>
        <dbReference type="ChEBI" id="CHEBI:29035"/>
    </ligand>
</feature>
<feature type="binding site" evidence="1">
    <location>
        <position position="528"/>
    </location>
    <ligand>
        <name>Mn(2+)</name>
        <dbReference type="ChEBI" id="CHEBI:29035"/>
    </ligand>
</feature>
<evidence type="ECO:0000255" key="1">
    <source>
        <dbReference type="HAMAP-Rule" id="MF_01254"/>
    </source>
</evidence>
<gene>
    <name evidence="1" type="primary">fucI</name>
    <name type="ordered locus">SPC_3035</name>
</gene>
<reference key="1">
    <citation type="journal article" date="2009" name="PLoS ONE">
        <title>Salmonella paratyphi C: genetic divergence from Salmonella choleraesuis and pathogenic convergence with Salmonella typhi.</title>
        <authorList>
            <person name="Liu W.-Q."/>
            <person name="Feng Y."/>
            <person name="Wang Y."/>
            <person name="Zou Q.-H."/>
            <person name="Chen F."/>
            <person name="Guo J.-T."/>
            <person name="Peng Y.-H."/>
            <person name="Jin Y."/>
            <person name="Li Y.-G."/>
            <person name="Hu S.-N."/>
            <person name="Johnston R.N."/>
            <person name="Liu G.-R."/>
            <person name="Liu S.-L."/>
        </authorList>
    </citation>
    <scope>NUCLEOTIDE SEQUENCE [LARGE SCALE GENOMIC DNA]</scope>
    <source>
        <strain>RKS4594</strain>
    </source>
</reference>
<keyword id="KW-0119">Carbohydrate metabolism</keyword>
<keyword id="KW-0963">Cytoplasm</keyword>
<keyword id="KW-0294">Fucose metabolism</keyword>
<keyword id="KW-0413">Isomerase</keyword>
<keyword id="KW-0464">Manganese</keyword>
<keyword id="KW-0479">Metal-binding</keyword>